<evidence type="ECO:0000255" key="1">
    <source>
        <dbReference type="HAMAP-Rule" id="MF_01320"/>
    </source>
</evidence>
<evidence type="ECO:0000256" key="2">
    <source>
        <dbReference type="SAM" id="MobiDB-lite"/>
    </source>
</evidence>
<evidence type="ECO:0000305" key="3"/>
<keyword id="KW-0687">Ribonucleoprotein</keyword>
<keyword id="KW-0689">Ribosomal protein</keyword>
<keyword id="KW-0694">RNA-binding</keyword>
<keyword id="KW-0699">rRNA-binding</keyword>
<gene>
    <name evidence="1" type="primary">rplB</name>
    <name type="ordered locus">SZO_00530</name>
</gene>
<proteinExistence type="inferred from homology"/>
<sequence length="277" mass="29902">MGIKVYKPTTNGRRNMTSLDFAEITTSTPEKSLLVSLKNKAGRNNNGRITVRHQGGGHKRHYRLIDFKRNKDGVEAVVKTIEYDPNRTANIALVHYTDGVKAYIIAPKGLEVGQRIVSGPDADIKIGNALPLANIPVGTVVHNIELKPGKGGELVRAAGASAQVLGQEGKYVLVRLQSGEVRMILGTCRATVGTVGNEQQSLVNIGKAGRSRWKGIRPTVRGSVMNPNDHPHGGGEGKAPVGRKAPSTPWGKPALGLKTRNKKAKSNKLIVRRRNEK</sequence>
<reference key="1">
    <citation type="journal article" date="2009" name="PLoS Pathog.">
        <title>Genomic evidence for the evolution of Streptococcus equi: host restriction, increased virulence, and genetic exchange with human pathogens.</title>
        <authorList>
            <person name="Holden M.T.G."/>
            <person name="Heather Z."/>
            <person name="Paillot R."/>
            <person name="Steward K.F."/>
            <person name="Webb K."/>
            <person name="Ainslie F."/>
            <person name="Jourdan T."/>
            <person name="Bason N.C."/>
            <person name="Holroyd N.E."/>
            <person name="Mungall K."/>
            <person name="Quail M.A."/>
            <person name="Sanders M."/>
            <person name="Simmonds M."/>
            <person name="Willey D."/>
            <person name="Brooks K."/>
            <person name="Aanensen D.M."/>
            <person name="Spratt B.G."/>
            <person name="Jolley K.A."/>
            <person name="Maiden M.C.J."/>
            <person name="Kehoe M."/>
            <person name="Chanter N."/>
            <person name="Bentley S.D."/>
            <person name="Robinson C."/>
            <person name="Maskell D.J."/>
            <person name="Parkhill J."/>
            <person name="Waller A.S."/>
        </authorList>
    </citation>
    <scope>NUCLEOTIDE SEQUENCE [LARGE SCALE GENOMIC DNA]</scope>
    <source>
        <strain>H70</strain>
    </source>
</reference>
<feature type="chain" id="PRO_1000214459" description="Large ribosomal subunit protein uL2">
    <location>
        <begin position="1"/>
        <end position="277"/>
    </location>
</feature>
<feature type="region of interest" description="Disordered" evidence="2">
    <location>
        <begin position="219"/>
        <end position="277"/>
    </location>
</feature>
<feature type="compositionally biased region" description="Basic residues" evidence="2">
    <location>
        <begin position="259"/>
        <end position="277"/>
    </location>
</feature>
<protein>
    <recommendedName>
        <fullName evidence="1">Large ribosomal subunit protein uL2</fullName>
    </recommendedName>
    <alternativeName>
        <fullName evidence="3">50S ribosomal protein L2</fullName>
    </alternativeName>
</protein>
<name>RL2_STRS7</name>
<accession>C0MCB3</accession>
<dbReference type="EMBL" id="FM204884">
    <property type="protein sequence ID" value="CAW97650.1"/>
    <property type="molecule type" value="Genomic_DNA"/>
</dbReference>
<dbReference type="SMR" id="C0MCB3"/>
<dbReference type="KEGG" id="seq:SZO_00530"/>
<dbReference type="eggNOG" id="COG0090">
    <property type="taxonomic scope" value="Bacteria"/>
</dbReference>
<dbReference type="HOGENOM" id="CLU_036235_2_1_9"/>
<dbReference type="Proteomes" id="UP000001368">
    <property type="component" value="Chromosome"/>
</dbReference>
<dbReference type="GO" id="GO:0015934">
    <property type="term" value="C:large ribosomal subunit"/>
    <property type="evidence" value="ECO:0007669"/>
    <property type="project" value="InterPro"/>
</dbReference>
<dbReference type="GO" id="GO:0019843">
    <property type="term" value="F:rRNA binding"/>
    <property type="evidence" value="ECO:0007669"/>
    <property type="project" value="UniProtKB-UniRule"/>
</dbReference>
<dbReference type="GO" id="GO:0003735">
    <property type="term" value="F:structural constituent of ribosome"/>
    <property type="evidence" value="ECO:0007669"/>
    <property type="project" value="InterPro"/>
</dbReference>
<dbReference type="GO" id="GO:0016740">
    <property type="term" value="F:transferase activity"/>
    <property type="evidence" value="ECO:0007669"/>
    <property type="project" value="InterPro"/>
</dbReference>
<dbReference type="GO" id="GO:0002181">
    <property type="term" value="P:cytoplasmic translation"/>
    <property type="evidence" value="ECO:0007669"/>
    <property type="project" value="TreeGrafter"/>
</dbReference>
<dbReference type="FunFam" id="2.30.30.30:FF:000001">
    <property type="entry name" value="50S ribosomal protein L2"/>
    <property type="match status" value="1"/>
</dbReference>
<dbReference type="FunFam" id="2.40.50.140:FF:000003">
    <property type="entry name" value="50S ribosomal protein L2"/>
    <property type="match status" value="1"/>
</dbReference>
<dbReference type="FunFam" id="4.10.950.10:FF:000001">
    <property type="entry name" value="50S ribosomal protein L2"/>
    <property type="match status" value="1"/>
</dbReference>
<dbReference type="Gene3D" id="2.30.30.30">
    <property type="match status" value="1"/>
</dbReference>
<dbReference type="Gene3D" id="2.40.50.140">
    <property type="entry name" value="Nucleic acid-binding proteins"/>
    <property type="match status" value="1"/>
</dbReference>
<dbReference type="Gene3D" id="4.10.950.10">
    <property type="entry name" value="Ribosomal protein L2, domain 3"/>
    <property type="match status" value="1"/>
</dbReference>
<dbReference type="HAMAP" id="MF_01320_B">
    <property type="entry name" value="Ribosomal_uL2_B"/>
    <property type="match status" value="1"/>
</dbReference>
<dbReference type="InterPro" id="IPR012340">
    <property type="entry name" value="NA-bd_OB-fold"/>
</dbReference>
<dbReference type="InterPro" id="IPR014722">
    <property type="entry name" value="Rib_uL2_dom2"/>
</dbReference>
<dbReference type="InterPro" id="IPR002171">
    <property type="entry name" value="Ribosomal_uL2"/>
</dbReference>
<dbReference type="InterPro" id="IPR005880">
    <property type="entry name" value="Ribosomal_uL2_bac/org-type"/>
</dbReference>
<dbReference type="InterPro" id="IPR022669">
    <property type="entry name" value="Ribosomal_uL2_C"/>
</dbReference>
<dbReference type="InterPro" id="IPR022671">
    <property type="entry name" value="Ribosomal_uL2_CS"/>
</dbReference>
<dbReference type="InterPro" id="IPR014726">
    <property type="entry name" value="Ribosomal_uL2_dom3"/>
</dbReference>
<dbReference type="InterPro" id="IPR022666">
    <property type="entry name" value="Ribosomal_uL2_RNA-bd_dom"/>
</dbReference>
<dbReference type="InterPro" id="IPR008991">
    <property type="entry name" value="Translation_prot_SH3-like_sf"/>
</dbReference>
<dbReference type="NCBIfam" id="TIGR01171">
    <property type="entry name" value="rplB_bact"/>
    <property type="match status" value="1"/>
</dbReference>
<dbReference type="PANTHER" id="PTHR13691:SF5">
    <property type="entry name" value="LARGE RIBOSOMAL SUBUNIT PROTEIN UL2M"/>
    <property type="match status" value="1"/>
</dbReference>
<dbReference type="PANTHER" id="PTHR13691">
    <property type="entry name" value="RIBOSOMAL PROTEIN L2"/>
    <property type="match status" value="1"/>
</dbReference>
<dbReference type="Pfam" id="PF00181">
    <property type="entry name" value="Ribosomal_L2"/>
    <property type="match status" value="1"/>
</dbReference>
<dbReference type="Pfam" id="PF03947">
    <property type="entry name" value="Ribosomal_L2_C"/>
    <property type="match status" value="1"/>
</dbReference>
<dbReference type="PIRSF" id="PIRSF002158">
    <property type="entry name" value="Ribosomal_L2"/>
    <property type="match status" value="1"/>
</dbReference>
<dbReference type="SMART" id="SM01383">
    <property type="entry name" value="Ribosomal_L2"/>
    <property type="match status" value="1"/>
</dbReference>
<dbReference type="SMART" id="SM01382">
    <property type="entry name" value="Ribosomal_L2_C"/>
    <property type="match status" value="1"/>
</dbReference>
<dbReference type="SUPFAM" id="SSF50249">
    <property type="entry name" value="Nucleic acid-binding proteins"/>
    <property type="match status" value="1"/>
</dbReference>
<dbReference type="SUPFAM" id="SSF50104">
    <property type="entry name" value="Translation proteins SH3-like domain"/>
    <property type="match status" value="1"/>
</dbReference>
<dbReference type="PROSITE" id="PS00467">
    <property type="entry name" value="RIBOSOMAL_L2"/>
    <property type="match status" value="1"/>
</dbReference>
<organism>
    <name type="scientific">Streptococcus equi subsp. zooepidemicus (strain H70)</name>
    <dbReference type="NCBI Taxonomy" id="553483"/>
    <lineage>
        <taxon>Bacteria</taxon>
        <taxon>Bacillati</taxon>
        <taxon>Bacillota</taxon>
        <taxon>Bacilli</taxon>
        <taxon>Lactobacillales</taxon>
        <taxon>Streptococcaceae</taxon>
        <taxon>Streptococcus</taxon>
    </lineage>
</organism>
<comment type="function">
    <text evidence="1">One of the primary rRNA binding proteins. Required for association of the 30S and 50S subunits to form the 70S ribosome, for tRNA binding and peptide bond formation. It has been suggested to have peptidyltransferase activity; this is somewhat controversial. Makes several contacts with the 16S rRNA in the 70S ribosome.</text>
</comment>
<comment type="subunit">
    <text evidence="1">Part of the 50S ribosomal subunit. Forms a bridge to the 30S subunit in the 70S ribosome.</text>
</comment>
<comment type="similarity">
    <text evidence="1">Belongs to the universal ribosomal protein uL2 family.</text>
</comment>